<keyword id="KW-0963">Cytoplasm</keyword>
<keyword id="KW-0444">Lipid biosynthesis</keyword>
<keyword id="KW-0443">Lipid metabolism</keyword>
<keyword id="KW-0520">NAD</keyword>
<keyword id="KW-0521">NADP</keyword>
<keyword id="KW-0547">Nucleotide-binding</keyword>
<keyword id="KW-0560">Oxidoreductase</keyword>
<keyword id="KW-0594">Phospholipid biosynthesis</keyword>
<keyword id="KW-1208">Phospholipid metabolism</keyword>
<keyword id="KW-1185">Reference proteome</keyword>
<reference key="1">
    <citation type="submission" date="2006-08" db="EMBL/GenBank/DDBJ databases">
        <title>Complete sequence of Maricaulis maris MCS10.</title>
        <authorList>
            <consortium name="US DOE Joint Genome Institute"/>
            <person name="Copeland A."/>
            <person name="Lucas S."/>
            <person name="Lapidus A."/>
            <person name="Barry K."/>
            <person name="Detter J.C."/>
            <person name="Glavina del Rio T."/>
            <person name="Hammon N."/>
            <person name="Israni S."/>
            <person name="Dalin E."/>
            <person name="Tice H."/>
            <person name="Pitluck S."/>
            <person name="Saunders E."/>
            <person name="Brettin T."/>
            <person name="Bruce D."/>
            <person name="Han C."/>
            <person name="Tapia R."/>
            <person name="Gilna P."/>
            <person name="Schmutz J."/>
            <person name="Larimer F."/>
            <person name="Land M."/>
            <person name="Hauser L."/>
            <person name="Kyrpides N."/>
            <person name="Mikhailova N."/>
            <person name="Viollier P."/>
            <person name="Stephens C."/>
            <person name="Richardson P."/>
        </authorList>
    </citation>
    <scope>NUCLEOTIDE SEQUENCE [LARGE SCALE GENOMIC DNA]</scope>
    <source>
        <strain>MCS10</strain>
    </source>
</reference>
<name>GPDA_MARMM</name>
<accession>Q0ATQ3</accession>
<proteinExistence type="inferred from homology"/>
<comment type="function">
    <text evidence="1">Catalyzes the reduction of the glycolytic intermediate dihydroxyacetone phosphate (DHAP) to sn-glycerol 3-phosphate (G3P), the key precursor for phospholipid synthesis.</text>
</comment>
<comment type="catalytic activity">
    <reaction evidence="1">
        <text>sn-glycerol 3-phosphate + NAD(+) = dihydroxyacetone phosphate + NADH + H(+)</text>
        <dbReference type="Rhea" id="RHEA:11092"/>
        <dbReference type="ChEBI" id="CHEBI:15378"/>
        <dbReference type="ChEBI" id="CHEBI:57540"/>
        <dbReference type="ChEBI" id="CHEBI:57597"/>
        <dbReference type="ChEBI" id="CHEBI:57642"/>
        <dbReference type="ChEBI" id="CHEBI:57945"/>
        <dbReference type="EC" id="1.1.1.94"/>
    </reaction>
    <physiologicalReaction direction="right-to-left" evidence="1">
        <dbReference type="Rhea" id="RHEA:11094"/>
    </physiologicalReaction>
</comment>
<comment type="catalytic activity">
    <reaction evidence="1">
        <text>sn-glycerol 3-phosphate + NADP(+) = dihydroxyacetone phosphate + NADPH + H(+)</text>
        <dbReference type="Rhea" id="RHEA:11096"/>
        <dbReference type="ChEBI" id="CHEBI:15378"/>
        <dbReference type="ChEBI" id="CHEBI:57597"/>
        <dbReference type="ChEBI" id="CHEBI:57642"/>
        <dbReference type="ChEBI" id="CHEBI:57783"/>
        <dbReference type="ChEBI" id="CHEBI:58349"/>
        <dbReference type="EC" id="1.1.1.94"/>
    </reaction>
    <physiologicalReaction direction="right-to-left" evidence="1">
        <dbReference type="Rhea" id="RHEA:11098"/>
    </physiologicalReaction>
</comment>
<comment type="pathway">
    <text evidence="1">Membrane lipid metabolism; glycerophospholipid metabolism.</text>
</comment>
<comment type="subcellular location">
    <subcellularLocation>
        <location evidence="1">Cytoplasm</location>
    </subcellularLocation>
</comment>
<comment type="similarity">
    <text evidence="1">Belongs to the NAD-dependent glycerol-3-phosphate dehydrogenase family.</text>
</comment>
<protein>
    <recommendedName>
        <fullName evidence="1">Glycerol-3-phosphate dehydrogenase [NAD(P)+]</fullName>
        <ecNumber evidence="1">1.1.1.94</ecNumber>
    </recommendedName>
    <alternativeName>
        <fullName evidence="1">NAD(P)(+)-dependent glycerol-3-phosphate dehydrogenase</fullName>
    </alternativeName>
    <alternativeName>
        <fullName evidence="1">NAD(P)H-dependent dihydroxyacetone-phosphate reductase</fullName>
    </alternativeName>
</protein>
<feature type="chain" id="PRO_1000049525" description="Glycerol-3-phosphate dehydrogenase [NAD(P)+]">
    <location>
        <begin position="1"/>
        <end position="333"/>
    </location>
</feature>
<feature type="active site" description="Proton acceptor" evidence="1">
    <location>
        <position position="191"/>
    </location>
</feature>
<feature type="binding site" evidence="1">
    <location>
        <position position="15"/>
    </location>
    <ligand>
        <name>NADPH</name>
        <dbReference type="ChEBI" id="CHEBI:57783"/>
    </ligand>
</feature>
<feature type="binding site" evidence="1">
    <location>
        <position position="108"/>
    </location>
    <ligand>
        <name>NADPH</name>
        <dbReference type="ChEBI" id="CHEBI:57783"/>
    </ligand>
</feature>
<feature type="binding site" evidence="1">
    <location>
        <position position="108"/>
    </location>
    <ligand>
        <name>sn-glycerol 3-phosphate</name>
        <dbReference type="ChEBI" id="CHEBI:57597"/>
    </ligand>
</feature>
<feature type="binding site" evidence="1">
    <location>
        <position position="136"/>
    </location>
    <ligand>
        <name>sn-glycerol 3-phosphate</name>
        <dbReference type="ChEBI" id="CHEBI:57597"/>
    </ligand>
</feature>
<feature type="binding site" evidence="1">
    <location>
        <position position="138"/>
    </location>
    <ligand>
        <name>sn-glycerol 3-phosphate</name>
        <dbReference type="ChEBI" id="CHEBI:57597"/>
    </ligand>
</feature>
<feature type="binding site" evidence="1">
    <location>
        <position position="140"/>
    </location>
    <ligand>
        <name>NADPH</name>
        <dbReference type="ChEBI" id="CHEBI:57783"/>
    </ligand>
</feature>
<feature type="binding site" evidence="1">
    <location>
        <position position="191"/>
    </location>
    <ligand>
        <name>sn-glycerol 3-phosphate</name>
        <dbReference type="ChEBI" id="CHEBI:57597"/>
    </ligand>
</feature>
<feature type="binding site" evidence="1">
    <location>
        <position position="244"/>
    </location>
    <ligand>
        <name>sn-glycerol 3-phosphate</name>
        <dbReference type="ChEBI" id="CHEBI:57597"/>
    </ligand>
</feature>
<feature type="binding site" evidence="1">
    <location>
        <position position="254"/>
    </location>
    <ligand>
        <name>sn-glycerol 3-phosphate</name>
        <dbReference type="ChEBI" id="CHEBI:57597"/>
    </ligand>
</feature>
<feature type="binding site" evidence="1">
    <location>
        <position position="255"/>
    </location>
    <ligand>
        <name>NADPH</name>
        <dbReference type="ChEBI" id="CHEBI:57783"/>
    </ligand>
</feature>
<feature type="binding site" evidence="1">
    <location>
        <position position="255"/>
    </location>
    <ligand>
        <name>sn-glycerol 3-phosphate</name>
        <dbReference type="ChEBI" id="CHEBI:57597"/>
    </ligand>
</feature>
<feature type="binding site" evidence="1">
    <location>
        <position position="256"/>
    </location>
    <ligand>
        <name>sn-glycerol 3-phosphate</name>
        <dbReference type="ChEBI" id="CHEBI:57597"/>
    </ligand>
</feature>
<feature type="binding site" evidence="1">
    <location>
        <position position="279"/>
    </location>
    <ligand>
        <name>NADPH</name>
        <dbReference type="ChEBI" id="CHEBI:57783"/>
    </ligand>
</feature>
<feature type="binding site" evidence="1">
    <location>
        <position position="281"/>
    </location>
    <ligand>
        <name>NADPH</name>
        <dbReference type="ChEBI" id="CHEBI:57783"/>
    </ligand>
</feature>
<evidence type="ECO:0000255" key="1">
    <source>
        <dbReference type="HAMAP-Rule" id="MF_00394"/>
    </source>
</evidence>
<gene>
    <name evidence="1" type="primary">gpsA</name>
    <name type="ordered locus">Mmar10_0038</name>
</gene>
<organism>
    <name type="scientific">Maricaulis maris (strain MCS10)</name>
    <name type="common">Caulobacter maris</name>
    <dbReference type="NCBI Taxonomy" id="394221"/>
    <lineage>
        <taxon>Bacteria</taxon>
        <taxon>Pseudomonadati</taxon>
        <taxon>Pseudomonadota</taxon>
        <taxon>Alphaproteobacteria</taxon>
        <taxon>Maricaulales</taxon>
        <taxon>Maricaulaceae</taxon>
        <taxon>Maricaulis</taxon>
    </lineage>
</organism>
<sequence>MSEYQSIGVIGAGAWGTALAQTAAKAGRDVTLWSFENDVAEAVNTKHENTIYLPDVALSTAIVATTSISDLDACDAILAVAPAQHLRRVLEGFLPYARPGLPIVLCAKGIEQSSLSMMTQVLKETIPAALPAVLSGPSFAIDTAQGLPTAVTLACADETVGNALIEALGTSRFRPYLATDLIGAEIGGAVKNVLAIGCGISEGKGLGKSAHAALISRGFAEMTRLALALGAQRETLAGLCGLGDLVLTCSSPQSRNMSCGLALGRGVSLDDIMSGRRAVTEGVASAPAVVELARRHGVEMPICEAVNEILAGRASVDDAIETLLARPFTLETA</sequence>
<dbReference type="EC" id="1.1.1.94" evidence="1"/>
<dbReference type="EMBL" id="CP000449">
    <property type="protein sequence ID" value="ABI64334.1"/>
    <property type="molecule type" value="Genomic_DNA"/>
</dbReference>
<dbReference type="RefSeq" id="WP_011641981.1">
    <property type="nucleotide sequence ID" value="NC_008347.1"/>
</dbReference>
<dbReference type="SMR" id="Q0ATQ3"/>
<dbReference type="STRING" id="394221.Mmar10_0038"/>
<dbReference type="KEGG" id="mmr:Mmar10_0038"/>
<dbReference type="eggNOG" id="COG0240">
    <property type="taxonomic scope" value="Bacteria"/>
</dbReference>
<dbReference type="HOGENOM" id="CLU_033449_0_2_5"/>
<dbReference type="OrthoDB" id="9812273at2"/>
<dbReference type="UniPathway" id="UPA00940"/>
<dbReference type="Proteomes" id="UP000001964">
    <property type="component" value="Chromosome"/>
</dbReference>
<dbReference type="GO" id="GO:0005829">
    <property type="term" value="C:cytosol"/>
    <property type="evidence" value="ECO:0007669"/>
    <property type="project" value="TreeGrafter"/>
</dbReference>
<dbReference type="GO" id="GO:0047952">
    <property type="term" value="F:glycerol-3-phosphate dehydrogenase [NAD(P)+] activity"/>
    <property type="evidence" value="ECO:0007669"/>
    <property type="project" value="UniProtKB-UniRule"/>
</dbReference>
<dbReference type="GO" id="GO:0051287">
    <property type="term" value="F:NAD binding"/>
    <property type="evidence" value="ECO:0007669"/>
    <property type="project" value="InterPro"/>
</dbReference>
<dbReference type="GO" id="GO:0005975">
    <property type="term" value="P:carbohydrate metabolic process"/>
    <property type="evidence" value="ECO:0007669"/>
    <property type="project" value="InterPro"/>
</dbReference>
<dbReference type="GO" id="GO:0046167">
    <property type="term" value="P:glycerol-3-phosphate biosynthetic process"/>
    <property type="evidence" value="ECO:0007669"/>
    <property type="project" value="UniProtKB-UniRule"/>
</dbReference>
<dbReference type="GO" id="GO:0046168">
    <property type="term" value="P:glycerol-3-phosphate catabolic process"/>
    <property type="evidence" value="ECO:0007669"/>
    <property type="project" value="InterPro"/>
</dbReference>
<dbReference type="GO" id="GO:0006650">
    <property type="term" value="P:glycerophospholipid metabolic process"/>
    <property type="evidence" value="ECO:0007669"/>
    <property type="project" value="UniProtKB-UniRule"/>
</dbReference>
<dbReference type="GO" id="GO:0008654">
    <property type="term" value="P:phospholipid biosynthetic process"/>
    <property type="evidence" value="ECO:0007669"/>
    <property type="project" value="UniProtKB-KW"/>
</dbReference>
<dbReference type="FunFam" id="1.10.1040.10:FF:000001">
    <property type="entry name" value="Glycerol-3-phosphate dehydrogenase [NAD(P)+]"/>
    <property type="match status" value="1"/>
</dbReference>
<dbReference type="FunFam" id="3.40.50.720:FF:000019">
    <property type="entry name" value="Glycerol-3-phosphate dehydrogenase [NAD(P)+]"/>
    <property type="match status" value="1"/>
</dbReference>
<dbReference type="Gene3D" id="1.10.1040.10">
    <property type="entry name" value="N-(1-d-carboxylethyl)-l-norvaline Dehydrogenase, domain 2"/>
    <property type="match status" value="1"/>
</dbReference>
<dbReference type="Gene3D" id="3.40.50.720">
    <property type="entry name" value="NAD(P)-binding Rossmann-like Domain"/>
    <property type="match status" value="1"/>
</dbReference>
<dbReference type="HAMAP" id="MF_00394">
    <property type="entry name" value="NAD_Glyc3P_dehydrog"/>
    <property type="match status" value="1"/>
</dbReference>
<dbReference type="InterPro" id="IPR008927">
    <property type="entry name" value="6-PGluconate_DH-like_C_sf"/>
</dbReference>
<dbReference type="InterPro" id="IPR013328">
    <property type="entry name" value="6PGD_dom2"/>
</dbReference>
<dbReference type="InterPro" id="IPR006168">
    <property type="entry name" value="G3P_DH_NAD-dep"/>
</dbReference>
<dbReference type="InterPro" id="IPR006109">
    <property type="entry name" value="G3P_DH_NAD-dep_C"/>
</dbReference>
<dbReference type="InterPro" id="IPR011128">
    <property type="entry name" value="G3P_DH_NAD-dep_N"/>
</dbReference>
<dbReference type="InterPro" id="IPR036291">
    <property type="entry name" value="NAD(P)-bd_dom_sf"/>
</dbReference>
<dbReference type="NCBIfam" id="NF000940">
    <property type="entry name" value="PRK00094.1-2"/>
    <property type="match status" value="1"/>
</dbReference>
<dbReference type="NCBIfam" id="NF000942">
    <property type="entry name" value="PRK00094.1-4"/>
    <property type="match status" value="1"/>
</dbReference>
<dbReference type="PANTHER" id="PTHR11728">
    <property type="entry name" value="GLYCEROL-3-PHOSPHATE DEHYDROGENASE"/>
    <property type="match status" value="1"/>
</dbReference>
<dbReference type="PANTHER" id="PTHR11728:SF1">
    <property type="entry name" value="GLYCEROL-3-PHOSPHATE DEHYDROGENASE [NAD(+)] 2, CHLOROPLASTIC"/>
    <property type="match status" value="1"/>
</dbReference>
<dbReference type="Pfam" id="PF07479">
    <property type="entry name" value="NAD_Gly3P_dh_C"/>
    <property type="match status" value="1"/>
</dbReference>
<dbReference type="Pfam" id="PF01210">
    <property type="entry name" value="NAD_Gly3P_dh_N"/>
    <property type="match status" value="1"/>
</dbReference>
<dbReference type="PIRSF" id="PIRSF000114">
    <property type="entry name" value="Glycerol-3-P_dh"/>
    <property type="match status" value="1"/>
</dbReference>
<dbReference type="PRINTS" id="PR00077">
    <property type="entry name" value="GPDHDRGNASE"/>
</dbReference>
<dbReference type="SUPFAM" id="SSF48179">
    <property type="entry name" value="6-phosphogluconate dehydrogenase C-terminal domain-like"/>
    <property type="match status" value="1"/>
</dbReference>
<dbReference type="SUPFAM" id="SSF51735">
    <property type="entry name" value="NAD(P)-binding Rossmann-fold domains"/>
    <property type="match status" value="1"/>
</dbReference>
<dbReference type="PROSITE" id="PS00957">
    <property type="entry name" value="NAD_G3PDH"/>
    <property type="match status" value="1"/>
</dbReference>